<feature type="chain" id="PRO_0000197941" description="Protein ApaG">
    <location>
        <begin position="1"/>
        <end position="130"/>
    </location>
</feature>
<feature type="domain" description="ApaG" evidence="1">
    <location>
        <begin position="3"/>
        <end position="127"/>
    </location>
</feature>
<sequence>MYRAVTRQIEVTVEPNFVPEQSSADRSRYFWSYTIVITNSGEETVQLKTRHWIITDATGRQQEVKGEGVVGEQPTLAPGERFEYTSGVPLSTASGFMTGRYQMVSESGERFEIDVPTFSLDSPDNKRVLN</sequence>
<reference key="1">
    <citation type="journal article" date="2002" name="DNA Res.">
        <title>Complete genomic sequence of nitrogen-fixing symbiotic bacterium Bradyrhizobium japonicum USDA110.</title>
        <authorList>
            <person name="Kaneko T."/>
            <person name="Nakamura Y."/>
            <person name="Sato S."/>
            <person name="Minamisawa K."/>
            <person name="Uchiumi T."/>
            <person name="Sasamoto S."/>
            <person name="Watanabe A."/>
            <person name="Idesawa K."/>
            <person name="Iriguchi M."/>
            <person name="Kawashima K."/>
            <person name="Kohara M."/>
            <person name="Matsumoto M."/>
            <person name="Shimpo S."/>
            <person name="Tsuruoka H."/>
            <person name="Wada T."/>
            <person name="Yamada M."/>
            <person name="Tabata S."/>
        </authorList>
    </citation>
    <scope>NUCLEOTIDE SEQUENCE [LARGE SCALE GENOMIC DNA]</scope>
    <source>
        <strain>JCM 10833 / BCRC 13528 / IAM 13628 / NBRC 14792 / USDA 110</strain>
    </source>
</reference>
<gene>
    <name evidence="1" type="primary">apaG</name>
    <name type="ordered locus">bll1101</name>
</gene>
<organism>
    <name type="scientific">Bradyrhizobium diazoefficiens (strain JCM 10833 / BCRC 13528 / IAM 13628 / NBRC 14792 / USDA 110)</name>
    <dbReference type="NCBI Taxonomy" id="224911"/>
    <lineage>
        <taxon>Bacteria</taxon>
        <taxon>Pseudomonadati</taxon>
        <taxon>Pseudomonadota</taxon>
        <taxon>Alphaproteobacteria</taxon>
        <taxon>Hyphomicrobiales</taxon>
        <taxon>Nitrobacteraceae</taxon>
        <taxon>Bradyrhizobium</taxon>
    </lineage>
</organism>
<comment type="sequence caution" evidence="2">
    <conflict type="erroneous initiation">
        <sequence resource="EMBL-CDS" id="BAC46366"/>
    </conflict>
</comment>
<protein>
    <recommendedName>
        <fullName evidence="1">Protein ApaG</fullName>
    </recommendedName>
</protein>
<accession>Q89VE6</accession>
<proteinExistence type="inferred from homology"/>
<evidence type="ECO:0000255" key="1">
    <source>
        <dbReference type="HAMAP-Rule" id="MF_00791"/>
    </source>
</evidence>
<evidence type="ECO:0000305" key="2"/>
<keyword id="KW-1185">Reference proteome</keyword>
<name>APAG_BRADU</name>
<dbReference type="EMBL" id="BA000040">
    <property type="protein sequence ID" value="BAC46366.1"/>
    <property type="status" value="ALT_INIT"/>
    <property type="molecule type" value="Genomic_DNA"/>
</dbReference>
<dbReference type="RefSeq" id="NP_767741.1">
    <property type="nucleotide sequence ID" value="NC_004463.1"/>
</dbReference>
<dbReference type="RefSeq" id="WP_028172741.1">
    <property type="nucleotide sequence ID" value="NC_004463.1"/>
</dbReference>
<dbReference type="SMR" id="Q89VE6"/>
<dbReference type="FunCoup" id="Q89VE6">
    <property type="interactions" value="11"/>
</dbReference>
<dbReference type="STRING" id="224911.AAV28_02365"/>
<dbReference type="EnsemblBacteria" id="BAC46366">
    <property type="protein sequence ID" value="BAC46366"/>
    <property type="gene ID" value="BAC46366"/>
</dbReference>
<dbReference type="GeneID" id="46488372"/>
<dbReference type="KEGG" id="bja:bll1101"/>
<dbReference type="PATRIC" id="fig|224911.44.peg.500"/>
<dbReference type="eggNOG" id="COG2967">
    <property type="taxonomic scope" value="Bacteria"/>
</dbReference>
<dbReference type="HOGENOM" id="CLU_128074_1_0_5"/>
<dbReference type="InParanoid" id="Q89VE6"/>
<dbReference type="OrthoDB" id="9795226at2"/>
<dbReference type="Proteomes" id="UP000002526">
    <property type="component" value="Chromosome"/>
</dbReference>
<dbReference type="GO" id="GO:0070987">
    <property type="term" value="P:error-free translesion synthesis"/>
    <property type="evidence" value="ECO:0000318"/>
    <property type="project" value="GO_Central"/>
</dbReference>
<dbReference type="Gene3D" id="2.60.40.1470">
    <property type="entry name" value="ApaG domain"/>
    <property type="match status" value="1"/>
</dbReference>
<dbReference type="HAMAP" id="MF_00791">
    <property type="entry name" value="ApaG"/>
    <property type="match status" value="1"/>
</dbReference>
<dbReference type="InterPro" id="IPR007474">
    <property type="entry name" value="ApaG_domain"/>
</dbReference>
<dbReference type="InterPro" id="IPR036767">
    <property type="entry name" value="ApaG_sf"/>
</dbReference>
<dbReference type="InterPro" id="IPR023065">
    <property type="entry name" value="Uncharacterised_ApaG"/>
</dbReference>
<dbReference type="NCBIfam" id="NF003967">
    <property type="entry name" value="PRK05461.1"/>
    <property type="match status" value="1"/>
</dbReference>
<dbReference type="PANTHER" id="PTHR14289">
    <property type="entry name" value="F-BOX ONLY PROTEIN 3"/>
    <property type="match status" value="1"/>
</dbReference>
<dbReference type="PANTHER" id="PTHR14289:SF16">
    <property type="entry name" value="POLYMERASE DELTA-INTERACTING PROTEIN 2"/>
    <property type="match status" value="1"/>
</dbReference>
<dbReference type="Pfam" id="PF04379">
    <property type="entry name" value="DUF525"/>
    <property type="match status" value="1"/>
</dbReference>
<dbReference type="SUPFAM" id="SSF110069">
    <property type="entry name" value="ApaG-like"/>
    <property type="match status" value="1"/>
</dbReference>
<dbReference type="PROSITE" id="PS51087">
    <property type="entry name" value="APAG"/>
    <property type="match status" value="1"/>
</dbReference>